<organism>
    <name type="scientific">Myxococcus xanthus (strain DK1622)</name>
    <dbReference type="NCBI Taxonomy" id="246197"/>
    <lineage>
        <taxon>Bacteria</taxon>
        <taxon>Pseudomonadati</taxon>
        <taxon>Myxococcota</taxon>
        <taxon>Myxococcia</taxon>
        <taxon>Myxococcales</taxon>
        <taxon>Cystobacterineae</taxon>
        <taxon>Myxococcaceae</taxon>
        <taxon>Myxococcus</taxon>
    </lineage>
</organism>
<sequence>MATLEQLRFDNTYARLPAGFGARVHPSPFPDAKLVSVNPAALKLLDLTPEEAQRPEFVAAMGGAKPLPGMEPFAMVYAGHQFGVYVPRLGDGRALLLGEVRDAAGAKWDLHLKGGGPTPFSRGGDGRAVLRSTIREYLCGEAMHGLGIPTTRGLGILGSQAPVYREAVETGAMLVRMAPSHVRFGTFEFFHYTEQTEHVATLADHVITEHFPQLAGQEGRYARFYTEVVERTARLIAQWQAVGFAHGVMNTDNMSILGLTLDYGPFGFLDDFEPGFICNHSDDRGRYAFDQQPRIGLWNLACLGEALLTLISEDEARAALATYQPAYNAHFMDRMRAKLGLRETRDEDRELVSDLFARMAEAHVDYTRFFRALGHFASADGADTRPVRDMFPAPEGFDAWAGRYRARLAAEGSVDAERHARMTRVNPKYVLRNWVAQEAISRAEAGDFSLVDRLLGVLSDPFAEHPDAEPYAAAPPTWGRHLAVSCSS</sequence>
<accession>Q1DDZ9</accession>
<gene>
    <name evidence="1" type="primary">ydiU</name>
    <name evidence="1" type="synonym">selO</name>
    <name type="ordered locus">MXAN_0863</name>
</gene>
<feature type="chain" id="PRO_0000271835" description="Protein nucleotidyltransferase YdiU">
    <location>
        <begin position="1"/>
        <end position="488"/>
    </location>
</feature>
<feature type="active site" description="Proton acceptor" evidence="1">
    <location>
        <position position="252"/>
    </location>
</feature>
<feature type="binding site" evidence="1">
    <location>
        <position position="90"/>
    </location>
    <ligand>
        <name>ATP</name>
        <dbReference type="ChEBI" id="CHEBI:30616"/>
    </ligand>
</feature>
<feature type="binding site" evidence="1">
    <location>
        <position position="92"/>
    </location>
    <ligand>
        <name>ATP</name>
        <dbReference type="ChEBI" id="CHEBI:30616"/>
    </ligand>
</feature>
<feature type="binding site" evidence="1">
    <location>
        <position position="93"/>
    </location>
    <ligand>
        <name>ATP</name>
        <dbReference type="ChEBI" id="CHEBI:30616"/>
    </ligand>
</feature>
<feature type="binding site" evidence="1">
    <location>
        <position position="113"/>
    </location>
    <ligand>
        <name>ATP</name>
        <dbReference type="ChEBI" id="CHEBI:30616"/>
    </ligand>
</feature>
<feature type="binding site" evidence="1">
    <location>
        <position position="125"/>
    </location>
    <ligand>
        <name>ATP</name>
        <dbReference type="ChEBI" id="CHEBI:30616"/>
    </ligand>
</feature>
<feature type="binding site" evidence="1">
    <location>
        <position position="126"/>
    </location>
    <ligand>
        <name>ATP</name>
        <dbReference type="ChEBI" id="CHEBI:30616"/>
    </ligand>
</feature>
<feature type="binding site" evidence="1">
    <location>
        <position position="176"/>
    </location>
    <ligand>
        <name>ATP</name>
        <dbReference type="ChEBI" id="CHEBI:30616"/>
    </ligand>
</feature>
<feature type="binding site" evidence="1">
    <location>
        <position position="183"/>
    </location>
    <ligand>
        <name>ATP</name>
        <dbReference type="ChEBI" id="CHEBI:30616"/>
    </ligand>
</feature>
<feature type="binding site" evidence="1">
    <location>
        <position position="253"/>
    </location>
    <ligand>
        <name>Mg(2+)</name>
        <dbReference type="ChEBI" id="CHEBI:18420"/>
    </ligand>
</feature>
<feature type="binding site" evidence="1">
    <location>
        <position position="262"/>
    </location>
    <ligand>
        <name>ATP</name>
        <dbReference type="ChEBI" id="CHEBI:30616"/>
    </ligand>
</feature>
<feature type="binding site" evidence="1">
    <location>
        <position position="262"/>
    </location>
    <ligand>
        <name>Mg(2+)</name>
        <dbReference type="ChEBI" id="CHEBI:18420"/>
    </ligand>
</feature>
<keyword id="KW-0067">ATP-binding</keyword>
<keyword id="KW-0460">Magnesium</keyword>
<keyword id="KW-0464">Manganese</keyword>
<keyword id="KW-0479">Metal-binding</keyword>
<keyword id="KW-0547">Nucleotide-binding</keyword>
<keyword id="KW-0548">Nucleotidyltransferase</keyword>
<keyword id="KW-1185">Reference proteome</keyword>
<keyword id="KW-0808">Transferase</keyword>
<name>SELO_MYXXD</name>
<proteinExistence type="inferred from homology"/>
<evidence type="ECO:0000255" key="1">
    <source>
        <dbReference type="HAMAP-Rule" id="MF_00692"/>
    </source>
</evidence>
<reference key="1">
    <citation type="journal article" date="2006" name="Proc. Natl. Acad. Sci. U.S.A.">
        <title>Evolution of sensory complexity recorded in a myxobacterial genome.</title>
        <authorList>
            <person name="Goldman B.S."/>
            <person name="Nierman W.C."/>
            <person name="Kaiser D."/>
            <person name="Slater S.C."/>
            <person name="Durkin A.S."/>
            <person name="Eisen J.A."/>
            <person name="Ronning C.M."/>
            <person name="Barbazuk W.B."/>
            <person name="Blanchard M."/>
            <person name="Field C."/>
            <person name="Halling C."/>
            <person name="Hinkle G."/>
            <person name="Iartchuk O."/>
            <person name="Kim H.S."/>
            <person name="Mackenzie C."/>
            <person name="Madupu R."/>
            <person name="Miller N."/>
            <person name="Shvartsbeyn A."/>
            <person name="Sullivan S.A."/>
            <person name="Vaudin M."/>
            <person name="Wiegand R."/>
            <person name="Kaplan H.B."/>
        </authorList>
    </citation>
    <scope>NUCLEOTIDE SEQUENCE [LARGE SCALE GENOMIC DNA]</scope>
    <source>
        <strain>DK1622</strain>
    </source>
</reference>
<protein>
    <recommendedName>
        <fullName evidence="1">Protein nucleotidyltransferase YdiU</fullName>
        <ecNumber evidence="1">2.7.7.-</ecNumber>
    </recommendedName>
    <alternativeName>
        <fullName evidence="1">Protein adenylyltransferase YdiU</fullName>
        <ecNumber evidence="1">2.7.7.108</ecNumber>
    </alternativeName>
    <alternativeName>
        <fullName evidence="1">Protein uridylyltransferase YdiU</fullName>
        <ecNumber evidence="1">2.7.7.-</ecNumber>
    </alternativeName>
</protein>
<comment type="function">
    <text evidence="1">Nucleotidyltransferase involved in the post-translational modification of proteins. It can catalyze the addition of adenosine monophosphate (AMP) or uridine monophosphate (UMP) to a protein, resulting in modifications known as AMPylation and UMPylation.</text>
</comment>
<comment type="catalytic activity">
    <reaction evidence="1">
        <text>L-seryl-[protein] + ATP = 3-O-(5'-adenylyl)-L-seryl-[protein] + diphosphate</text>
        <dbReference type="Rhea" id="RHEA:58120"/>
        <dbReference type="Rhea" id="RHEA-COMP:9863"/>
        <dbReference type="Rhea" id="RHEA-COMP:15073"/>
        <dbReference type="ChEBI" id="CHEBI:29999"/>
        <dbReference type="ChEBI" id="CHEBI:30616"/>
        <dbReference type="ChEBI" id="CHEBI:33019"/>
        <dbReference type="ChEBI" id="CHEBI:142516"/>
        <dbReference type="EC" id="2.7.7.108"/>
    </reaction>
</comment>
<comment type="catalytic activity">
    <reaction evidence="1">
        <text>L-threonyl-[protein] + ATP = 3-O-(5'-adenylyl)-L-threonyl-[protein] + diphosphate</text>
        <dbReference type="Rhea" id="RHEA:54292"/>
        <dbReference type="Rhea" id="RHEA-COMP:11060"/>
        <dbReference type="Rhea" id="RHEA-COMP:13847"/>
        <dbReference type="ChEBI" id="CHEBI:30013"/>
        <dbReference type="ChEBI" id="CHEBI:30616"/>
        <dbReference type="ChEBI" id="CHEBI:33019"/>
        <dbReference type="ChEBI" id="CHEBI:138113"/>
        <dbReference type="EC" id="2.7.7.108"/>
    </reaction>
</comment>
<comment type="catalytic activity">
    <reaction evidence="1">
        <text>L-tyrosyl-[protein] + ATP = O-(5'-adenylyl)-L-tyrosyl-[protein] + diphosphate</text>
        <dbReference type="Rhea" id="RHEA:54288"/>
        <dbReference type="Rhea" id="RHEA-COMP:10136"/>
        <dbReference type="Rhea" id="RHEA-COMP:13846"/>
        <dbReference type="ChEBI" id="CHEBI:30616"/>
        <dbReference type="ChEBI" id="CHEBI:33019"/>
        <dbReference type="ChEBI" id="CHEBI:46858"/>
        <dbReference type="ChEBI" id="CHEBI:83624"/>
        <dbReference type="EC" id="2.7.7.108"/>
    </reaction>
</comment>
<comment type="catalytic activity">
    <reaction evidence="1">
        <text>L-histidyl-[protein] + UTP = N(tele)-(5'-uridylyl)-L-histidyl-[protein] + diphosphate</text>
        <dbReference type="Rhea" id="RHEA:83891"/>
        <dbReference type="Rhea" id="RHEA-COMP:9745"/>
        <dbReference type="Rhea" id="RHEA-COMP:20239"/>
        <dbReference type="ChEBI" id="CHEBI:29979"/>
        <dbReference type="ChEBI" id="CHEBI:33019"/>
        <dbReference type="ChEBI" id="CHEBI:46398"/>
        <dbReference type="ChEBI" id="CHEBI:233474"/>
    </reaction>
</comment>
<comment type="catalytic activity">
    <reaction evidence="1">
        <text>L-seryl-[protein] + UTP = O-(5'-uridylyl)-L-seryl-[protein] + diphosphate</text>
        <dbReference type="Rhea" id="RHEA:64604"/>
        <dbReference type="Rhea" id="RHEA-COMP:9863"/>
        <dbReference type="Rhea" id="RHEA-COMP:16635"/>
        <dbReference type="ChEBI" id="CHEBI:29999"/>
        <dbReference type="ChEBI" id="CHEBI:33019"/>
        <dbReference type="ChEBI" id="CHEBI:46398"/>
        <dbReference type="ChEBI" id="CHEBI:156051"/>
    </reaction>
</comment>
<comment type="catalytic activity">
    <reaction evidence="1">
        <text>L-tyrosyl-[protein] + UTP = O-(5'-uridylyl)-L-tyrosyl-[protein] + diphosphate</text>
        <dbReference type="Rhea" id="RHEA:83887"/>
        <dbReference type="Rhea" id="RHEA-COMP:10136"/>
        <dbReference type="Rhea" id="RHEA-COMP:20238"/>
        <dbReference type="ChEBI" id="CHEBI:33019"/>
        <dbReference type="ChEBI" id="CHEBI:46398"/>
        <dbReference type="ChEBI" id="CHEBI:46858"/>
        <dbReference type="ChEBI" id="CHEBI:90602"/>
    </reaction>
</comment>
<comment type="cofactor">
    <cofactor evidence="1">
        <name>Mg(2+)</name>
        <dbReference type="ChEBI" id="CHEBI:18420"/>
    </cofactor>
    <cofactor evidence="1">
        <name>Mn(2+)</name>
        <dbReference type="ChEBI" id="CHEBI:29035"/>
    </cofactor>
</comment>
<comment type="similarity">
    <text evidence="1">Belongs to the SELO family.</text>
</comment>
<dbReference type="EC" id="2.7.7.-" evidence="1"/>
<dbReference type="EC" id="2.7.7.108" evidence="1"/>
<dbReference type="EMBL" id="CP000113">
    <property type="protein sequence ID" value="ABF91154.1"/>
    <property type="molecule type" value="Genomic_DNA"/>
</dbReference>
<dbReference type="RefSeq" id="WP_011550984.1">
    <property type="nucleotide sequence ID" value="NC_008095.1"/>
</dbReference>
<dbReference type="SMR" id="Q1DDZ9"/>
<dbReference type="STRING" id="246197.MXAN_0863"/>
<dbReference type="EnsemblBacteria" id="ABF91154">
    <property type="protein sequence ID" value="ABF91154"/>
    <property type="gene ID" value="MXAN_0863"/>
</dbReference>
<dbReference type="GeneID" id="41358322"/>
<dbReference type="KEGG" id="mxa:MXAN_0863"/>
<dbReference type="eggNOG" id="COG0397">
    <property type="taxonomic scope" value="Bacteria"/>
</dbReference>
<dbReference type="HOGENOM" id="CLU_010245_4_1_7"/>
<dbReference type="OrthoDB" id="9776281at2"/>
<dbReference type="Proteomes" id="UP000002402">
    <property type="component" value="Chromosome"/>
</dbReference>
<dbReference type="GO" id="GO:0070733">
    <property type="term" value="F:AMPylase activity"/>
    <property type="evidence" value="ECO:0007669"/>
    <property type="project" value="RHEA"/>
</dbReference>
<dbReference type="GO" id="GO:0005524">
    <property type="term" value="F:ATP binding"/>
    <property type="evidence" value="ECO:0007669"/>
    <property type="project" value="UniProtKB-UniRule"/>
</dbReference>
<dbReference type="GO" id="GO:0000287">
    <property type="term" value="F:magnesium ion binding"/>
    <property type="evidence" value="ECO:0007669"/>
    <property type="project" value="UniProtKB-UniRule"/>
</dbReference>
<dbReference type="HAMAP" id="MF_00692">
    <property type="entry name" value="YdiU_SelO"/>
    <property type="match status" value="1"/>
</dbReference>
<dbReference type="InterPro" id="IPR003846">
    <property type="entry name" value="SelO"/>
</dbReference>
<dbReference type="NCBIfam" id="NF000658">
    <property type="entry name" value="PRK00029.1"/>
    <property type="match status" value="1"/>
</dbReference>
<dbReference type="PANTHER" id="PTHR32057">
    <property type="entry name" value="PROTEIN ADENYLYLTRANSFERASE SELO, MITOCHONDRIAL"/>
    <property type="match status" value="1"/>
</dbReference>
<dbReference type="PANTHER" id="PTHR32057:SF14">
    <property type="entry name" value="PROTEIN ADENYLYLTRANSFERASE SELO, MITOCHONDRIAL"/>
    <property type="match status" value="1"/>
</dbReference>
<dbReference type="Pfam" id="PF02696">
    <property type="entry name" value="SelO"/>
    <property type="match status" value="1"/>
</dbReference>